<comment type="function">
    <text evidence="1 4 5 9">Hydroxymethylglutaryl-CoA synthase; part of the first module of ergosterol biosynthesis pathway that includes the early steps of the pathway, conserved across all eukaryotes, and which results in the formation of mevalonate from acetyl-coenzyme A (acetyl-CoA) (PubMed:23138457). This module also plays a key role in the biosynthesis of triterpenes such as ganoderic acids (GA), a group of highly oxygenated lanostane-type triterpenoids which are well recognized as a main group of unique bioactive compounds in the medicinal mushroom Ganoderma lucidum (Probable) (PubMed:23138457). In this module, the acetyl-CoA acetyltransferase catalyzes the formation of acetoacetyl-CoA (By similarity). The hydroxymethylglutaryl-CoA synthase HMGS then condenses acetyl-CoA with acetoacetyl-CoA to form HMG-CoA (PubMed:23138457). The rate-limiting step of the early module is the reduction to mevalonate by the 3-hydroxy-3-methylglutaryl-coenzyme A (HMG-CoA) reductase (PubMed:18460810).</text>
</comment>
<comment type="catalytic activity">
    <reaction evidence="1">
        <text>acetoacetyl-CoA + acetyl-CoA + H2O = (3S)-3-hydroxy-3-methylglutaryl-CoA + CoA + H(+)</text>
        <dbReference type="Rhea" id="RHEA:10188"/>
        <dbReference type="ChEBI" id="CHEBI:15377"/>
        <dbReference type="ChEBI" id="CHEBI:15378"/>
        <dbReference type="ChEBI" id="CHEBI:43074"/>
        <dbReference type="ChEBI" id="CHEBI:57286"/>
        <dbReference type="ChEBI" id="CHEBI:57287"/>
        <dbReference type="ChEBI" id="CHEBI:57288"/>
        <dbReference type="EC" id="2.3.3.10"/>
    </reaction>
    <physiologicalReaction direction="left-to-right" evidence="1">
        <dbReference type="Rhea" id="RHEA:10189"/>
    </physiologicalReaction>
</comment>
<comment type="pathway">
    <text evidence="1">Metabolic intermediate biosynthesis; (R)-mevalonate biosynthesis; (R)-mevalonate from acetyl-CoA: step 2/3.</text>
</comment>
<comment type="induction">
    <text evidence="5">Expression is up-regulated by salicylic acid, abscisic acid and methyl jasmonate.</text>
</comment>
<comment type="similarity">
    <text evidence="7">Belongs to the thiolase-like superfamily. HMG-CoA synthase family.</text>
</comment>
<evidence type="ECO:0000250" key="1">
    <source>
        <dbReference type="UniProtKB" id="P54839"/>
    </source>
</evidence>
<evidence type="ECO:0000250" key="2">
    <source>
        <dbReference type="UniProtKB" id="P54868"/>
    </source>
</evidence>
<evidence type="ECO:0000255" key="3">
    <source>
        <dbReference type="PROSITE-ProRule" id="PRU10116"/>
    </source>
</evidence>
<evidence type="ECO:0000269" key="4">
    <source>
    </source>
</evidence>
<evidence type="ECO:0000269" key="5">
    <source>
    </source>
</evidence>
<evidence type="ECO:0000303" key="6">
    <source>
    </source>
</evidence>
<evidence type="ECO:0000305" key="7"/>
<evidence type="ECO:0000305" key="8">
    <source>
    </source>
</evidence>
<evidence type="ECO:0000305" key="9">
    <source>
    </source>
</evidence>
<dbReference type="EC" id="2.3.3.10" evidence="8"/>
<dbReference type="EMBL" id="JN391468">
    <property type="protein sequence ID" value="AFM91095.1"/>
    <property type="molecule type" value="mRNA"/>
</dbReference>
<dbReference type="EMBL" id="JN391469">
    <property type="protein sequence ID" value="AFM91096.1"/>
    <property type="molecule type" value="Genomic_DNA"/>
</dbReference>
<dbReference type="SMR" id="K7PL94"/>
<dbReference type="UniPathway" id="UPA00058">
    <property type="reaction ID" value="UER00102"/>
</dbReference>
<dbReference type="GO" id="GO:0004421">
    <property type="term" value="F:hydroxymethylglutaryl-CoA synthase activity"/>
    <property type="evidence" value="ECO:0007669"/>
    <property type="project" value="UniProtKB-EC"/>
</dbReference>
<dbReference type="GO" id="GO:0006084">
    <property type="term" value="P:acetyl-CoA metabolic process"/>
    <property type="evidence" value="ECO:0007669"/>
    <property type="project" value="InterPro"/>
</dbReference>
<dbReference type="GO" id="GO:0006696">
    <property type="term" value="P:ergosterol biosynthetic process"/>
    <property type="evidence" value="ECO:0007669"/>
    <property type="project" value="TreeGrafter"/>
</dbReference>
<dbReference type="GO" id="GO:0010142">
    <property type="term" value="P:farnesyl diphosphate biosynthetic process, mevalonate pathway"/>
    <property type="evidence" value="ECO:0007669"/>
    <property type="project" value="InterPro"/>
</dbReference>
<dbReference type="CDD" id="cd00827">
    <property type="entry name" value="init_cond_enzymes"/>
    <property type="match status" value="1"/>
</dbReference>
<dbReference type="FunFam" id="3.40.47.10:FF:000008">
    <property type="entry name" value="3-hydroxy-3-methylglutaryl coenzyme A synthase"/>
    <property type="match status" value="1"/>
</dbReference>
<dbReference type="Gene3D" id="3.40.47.10">
    <property type="match status" value="1"/>
</dbReference>
<dbReference type="InterPro" id="IPR013746">
    <property type="entry name" value="HMG_CoA_synt_C_dom"/>
</dbReference>
<dbReference type="InterPro" id="IPR013528">
    <property type="entry name" value="HMG_CoA_synth_N"/>
</dbReference>
<dbReference type="InterPro" id="IPR010122">
    <property type="entry name" value="HMG_CoA_synthase_euk"/>
</dbReference>
<dbReference type="InterPro" id="IPR016039">
    <property type="entry name" value="Thiolase-like"/>
</dbReference>
<dbReference type="NCBIfam" id="TIGR01833">
    <property type="entry name" value="HMG-CoA-S_euk"/>
    <property type="match status" value="1"/>
</dbReference>
<dbReference type="PANTHER" id="PTHR43323">
    <property type="entry name" value="3-HYDROXY-3-METHYLGLUTARYL COENZYME A SYNTHASE"/>
    <property type="match status" value="1"/>
</dbReference>
<dbReference type="PANTHER" id="PTHR43323:SF2">
    <property type="entry name" value="HYDROXYMETHYLGLUTARYL-COA SYNTHASE"/>
    <property type="match status" value="1"/>
</dbReference>
<dbReference type="Pfam" id="PF08540">
    <property type="entry name" value="HMG_CoA_synt_C"/>
    <property type="match status" value="1"/>
</dbReference>
<dbReference type="Pfam" id="PF01154">
    <property type="entry name" value="HMG_CoA_synt_N"/>
    <property type="match status" value="1"/>
</dbReference>
<dbReference type="SUPFAM" id="SSF53901">
    <property type="entry name" value="Thiolase-like"/>
    <property type="match status" value="2"/>
</dbReference>
<gene>
    <name evidence="6" type="primary">HMGS</name>
</gene>
<proteinExistence type="evidence at transcript level"/>
<name>ERG13_GANLU</name>
<protein>
    <recommendedName>
        <fullName evidence="6">Hydroxymethylglutaryl-CoA synthase</fullName>
        <shortName evidence="6">HMG-CoA synthase</shortName>
        <ecNumber evidence="8">2.3.3.10</ecNumber>
    </recommendedName>
    <alternativeName>
        <fullName evidence="1">3-hydroxy-3-methylglutaryl coenzyme A synthase</fullName>
    </alternativeName>
</protein>
<keyword id="KW-0444">Lipid biosynthesis</keyword>
<keyword id="KW-0443">Lipid metabolism</keyword>
<keyword id="KW-0752">Steroid biosynthesis</keyword>
<keyword id="KW-0753">Steroid metabolism</keyword>
<keyword id="KW-0756">Sterol biosynthesis</keyword>
<keyword id="KW-1207">Sterol metabolism</keyword>
<keyword id="KW-0808">Transferase</keyword>
<reference key="1">
    <citation type="journal article" date="2013" name="World J. Microbiol. Biotechnol.">
        <title>Molecular characterization and expression analysis of GlHMGS, a gene encoding hydroxymethylglutaryl-CoA synthase from Ganoderma lucidum (Ling-zhi) in ganoderic acid biosynthesis pathway.</title>
        <authorList>
            <person name="Ren A."/>
            <person name="Ouyang X."/>
            <person name="Shi L."/>
            <person name="Jiang A.L."/>
            <person name="Mu D.S."/>
            <person name="Li M.J."/>
            <person name="Han Q."/>
            <person name="Zhao M.W."/>
        </authorList>
    </citation>
    <scope>NUCLEOTIDE SEQUENCE [GENOMIC DNA / MRNA]</scope>
    <scope>FUNCTION</scope>
    <scope>INDUCTION</scope>
    <source>
        <strain>HG</strain>
    </source>
</reference>
<reference key="2">
    <citation type="journal article" date="2008" name="Biosci. Biotechnol. Biochem.">
        <title>Cloning and characterization of a gene encoding HMG-CoA reductase from Ganoderma lucidum and its functional identification in yeast.</title>
        <authorList>
            <person name="Shang C.H."/>
            <person name="Zhu F."/>
            <person name="Li N."/>
            <person name="Ou-Yang X."/>
            <person name="Shi L."/>
            <person name="Zhao M.W."/>
            <person name="Li Y.X."/>
        </authorList>
    </citation>
    <scope>FUNCTION</scope>
</reference>
<reference key="3">
    <citation type="journal article" date="2018" name="Biotechnol. Bioeng.">
        <title>Biosynthesis of a ganoderic acid in Saccharomyces cerevisiae by expressing a cytochrome P450 gene from Ganoderma lucidum.</title>
        <authorList>
            <person name="Wang W.F."/>
            <person name="Xiao H."/>
            <person name="Zhong J.J."/>
        </authorList>
    </citation>
    <scope>FUNCTION</scope>
</reference>
<accession>K7PL94</accession>
<organism>
    <name type="scientific">Ganoderma lucidum</name>
    <name type="common">Ling zhi medicinal fungus</name>
    <name type="synonym">Bracket fungus</name>
    <dbReference type="NCBI Taxonomy" id="5315"/>
    <lineage>
        <taxon>Eukaryota</taxon>
        <taxon>Fungi</taxon>
        <taxon>Dikarya</taxon>
        <taxon>Basidiomycota</taxon>
        <taxon>Agaricomycotina</taxon>
        <taxon>Agaricomycetes</taxon>
        <taxon>Polyporales</taxon>
        <taxon>Polyporaceae</taxon>
        <taxon>Ganoderma</taxon>
    </lineage>
</organism>
<sequence>MTVPINASTSQDVEAPPRPKDVGILAIEMYFPKRCISEEELEAFDSVSKGKYTIGLGQKFMACCDDREDINTFALTAMTSLIEKYNVDPKSIGRIDVGTETIIDKSKSTKTHLMDYFAEAGNTDVEGVDSKNACYGSTAALFNAVNWIESSSWDGRNAIVVGGDIAIYAEGSGRPTGGAGAVAMLIGPNAPLVLEPIHGTHMANTYDFYKPKLDSEYPEVDGQLSITTYISAIDASYAAYRAKHAKAKKAAGLGGPAFSLADVDYPVFHSPYGKMVQKAHARLVYNDFLANPDAPRYAQVPERAAWLAQPYKASLTDKTLEKTFMGVAKAQFDGTVEKGMRCARRCGNMYTASLYGGLASLLASVEPAEIRGKRISMFAFGSGLASSFFTIKVKGDTTEVQEKLDLIRRLESMDVVPCQAYVDSLALREKNHNAGSYVPEGSIDNIWPGGYYLESIDSKYRRKYIRAPKA</sequence>
<feature type="chain" id="PRO_0000454390" description="Hydroxymethylglutaryl-CoA synthase">
    <location>
        <begin position="1"/>
        <end position="470"/>
    </location>
</feature>
<feature type="active site" description="Proton donor/acceptor" evidence="3">
    <location>
        <position position="100"/>
    </location>
</feature>
<feature type="active site" description="Acyl-thioester intermediate" evidence="3">
    <location>
        <position position="134"/>
    </location>
</feature>
<feature type="active site" description="Proton donor/acceptor" evidence="3">
    <location>
        <position position="269"/>
    </location>
</feature>
<feature type="binding site" evidence="2">
    <location>
        <position position="134"/>
    </location>
    <ligand>
        <name>(3S)-3-hydroxy-3-methylglutaryl-CoA</name>
        <dbReference type="ChEBI" id="CHEBI:43074"/>
    </ligand>
</feature>
<feature type="binding site" evidence="2">
    <location>
        <position position="176"/>
    </location>
    <ligand>
        <name>(3S)-3-hydroxy-3-methylglutaryl-CoA</name>
        <dbReference type="ChEBI" id="CHEBI:43074"/>
    </ligand>
</feature>
<feature type="binding site" evidence="2">
    <location>
        <position position="225"/>
    </location>
    <ligand>
        <name>(3S)-3-hydroxy-3-methylglutaryl-CoA</name>
        <dbReference type="ChEBI" id="CHEBI:43074"/>
    </ligand>
</feature>
<feature type="binding site" evidence="2">
    <location>
        <position position="269"/>
    </location>
    <ligand>
        <name>(3S)-3-hydroxy-3-methylglutaryl-CoA</name>
        <dbReference type="ChEBI" id="CHEBI:43074"/>
    </ligand>
</feature>
<feature type="binding site" evidence="2">
    <location>
        <position position="278"/>
    </location>
    <ligand>
        <name>(3S)-3-hydroxy-3-methylglutaryl-CoA</name>
        <dbReference type="ChEBI" id="CHEBI:43074"/>
    </ligand>
</feature>
<feature type="binding site" evidence="2">
    <location>
        <position position="348"/>
    </location>
    <ligand>
        <name>(3S)-3-hydroxy-3-methylglutaryl-CoA</name>
        <dbReference type="ChEBI" id="CHEBI:43074"/>
    </ligand>
</feature>
<feature type="binding site" evidence="2">
    <location>
        <position position="382"/>
    </location>
    <ligand>
        <name>(3S)-3-hydroxy-3-methylglutaryl-CoA</name>
        <dbReference type="ChEBI" id="CHEBI:43074"/>
    </ligand>
</feature>